<reference key="1">
    <citation type="journal article" date="2011" name="J. Bacteriol.">
        <title>Complete genome sequence and updated annotation of Desulfovibrio alaskensis G20.</title>
        <authorList>
            <person name="Hauser L.J."/>
            <person name="Land M.L."/>
            <person name="Brown S.D."/>
            <person name="Larimer F."/>
            <person name="Keller K.L."/>
            <person name="Rapp-Giles B.J."/>
            <person name="Price M.N."/>
            <person name="Lin M."/>
            <person name="Bruce D.C."/>
            <person name="Detter J.C."/>
            <person name="Tapia R."/>
            <person name="Han C.S."/>
            <person name="Goodwin L.A."/>
            <person name="Cheng J.F."/>
            <person name="Pitluck S."/>
            <person name="Copeland A."/>
            <person name="Lucas S."/>
            <person name="Nolan M."/>
            <person name="Lapidus A.L."/>
            <person name="Palumbo A.V."/>
            <person name="Wall J.D."/>
        </authorList>
    </citation>
    <scope>NUCLEOTIDE SEQUENCE [LARGE SCALE GENOMIC DNA]</scope>
    <source>
        <strain>ATCC BAA-1058 / DSM 17464 / G20</strain>
    </source>
</reference>
<reference key="2">
    <citation type="journal article" date="2011" name="Proc. Natl. Acad. Sci. U.S.A.">
        <title>Molecular hijacking of siroheme for the synthesis of heme and d1 heme.</title>
        <authorList>
            <person name="Bali S."/>
            <person name="Lawrence A.D."/>
            <person name="Lobo S.A."/>
            <person name="Saraiva L.M."/>
            <person name="Golding B.T."/>
            <person name="Palmer D.J."/>
            <person name="Howard M.J."/>
            <person name="Ferguson S.J."/>
            <person name="Warren M.J."/>
        </authorList>
    </citation>
    <scope>FUNCTION</scope>
    <scope>CATALYTIC ACTIVITY</scope>
    <scope>PATHWAY</scope>
    <scope>SUBUNIT</scope>
    <source>
        <strain>ATCC BAA-1058 / DSM 17464 / G20</strain>
    </source>
</reference>
<sequence>MTGPAVQDQELDQFDKKILDIIQTGFPLEPRPYAVIGDAVGLTEAEALARVRALKERKIIRRLGANFNSWKLGFRSTLCAAKVPEDKFDEFVAEVNSHVGVTHNYLRAHAYNVWFTFIGPSWEEVCSTLDSITQKTGIPILNLPAEELYKIRVDFKMDEDPAAD</sequence>
<accession>Q30Y72</accession>
<proteinExistence type="evidence at protein level"/>
<feature type="chain" id="PRO_0000450502" description="Siroheme decarboxylase alpha subunit">
    <location>
        <begin position="1"/>
        <end position="164"/>
    </location>
</feature>
<protein>
    <recommendedName>
        <fullName evidence="3">Siroheme decarboxylase alpha subunit</fullName>
        <ecNumber evidence="1">4.1.1.111</ecNumber>
    </recommendedName>
</protein>
<organism>
    <name type="scientific">Oleidesulfovibrio alaskensis (strain ATCC BAA-1058 / DSM 17464 / G20)</name>
    <name type="common">Desulfovibrio alaskensis</name>
    <dbReference type="NCBI Taxonomy" id="207559"/>
    <lineage>
        <taxon>Bacteria</taxon>
        <taxon>Pseudomonadati</taxon>
        <taxon>Thermodesulfobacteriota</taxon>
        <taxon>Desulfovibrionia</taxon>
        <taxon>Desulfovibrionales</taxon>
        <taxon>Desulfovibrionaceae</taxon>
        <taxon>Oleidesulfovibrio</taxon>
    </lineage>
</organism>
<keyword id="KW-0350">Heme biosynthesis</keyword>
<keyword id="KW-0456">Lyase</keyword>
<keyword id="KW-1185">Reference proteome</keyword>
<dbReference type="EC" id="4.1.1.111" evidence="1"/>
<dbReference type="EMBL" id="CP000112">
    <property type="protein sequence ID" value="ABB39374.1"/>
    <property type="molecule type" value="Genomic_DNA"/>
</dbReference>
<dbReference type="RefSeq" id="WP_011368422.1">
    <property type="nucleotide sequence ID" value="NC_007519.1"/>
</dbReference>
<dbReference type="SMR" id="Q30Y72"/>
<dbReference type="STRING" id="207559.Dde_2578"/>
<dbReference type="KEGG" id="dde:Dde_2578"/>
<dbReference type="eggNOG" id="COG1522">
    <property type="taxonomic scope" value="Bacteria"/>
</dbReference>
<dbReference type="HOGENOM" id="CLU_112007_1_0_7"/>
<dbReference type="UniPathway" id="UPA00252"/>
<dbReference type="Proteomes" id="UP000002710">
    <property type="component" value="Chromosome"/>
</dbReference>
<dbReference type="GO" id="GO:0016829">
    <property type="term" value="F:lyase activity"/>
    <property type="evidence" value="ECO:0007669"/>
    <property type="project" value="UniProtKB-KW"/>
</dbReference>
<dbReference type="GO" id="GO:0006783">
    <property type="term" value="P:heme biosynthetic process"/>
    <property type="evidence" value="ECO:0007669"/>
    <property type="project" value="UniProtKB-KW"/>
</dbReference>
<dbReference type="Gene3D" id="3.30.70.3460">
    <property type="match status" value="1"/>
</dbReference>
<dbReference type="Gene3D" id="1.10.10.10">
    <property type="entry name" value="Winged helix-like DNA-binding domain superfamily/Winged helix DNA-binding domain"/>
    <property type="match status" value="1"/>
</dbReference>
<dbReference type="InterPro" id="IPR040523">
    <property type="entry name" value="AsnC_trans_reg2"/>
</dbReference>
<dbReference type="InterPro" id="IPR050684">
    <property type="entry name" value="HTH-Siroheme_Decarb"/>
</dbReference>
<dbReference type="InterPro" id="IPR053953">
    <property type="entry name" value="NirdL-like_HTH"/>
</dbReference>
<dbReference type="InterPro" id="IPR053429">
    <property type="entry name" value="Siroheme_Decarboxylase"/>
</dbReference>
<dbReference type="InterPro" id="IPR019888">
    <property type="entry name" value="Tscrpt_reg_AsnC-like"/>
</dbReference>
<dbReference type="InterPro" id="IPR036388">
    <property type="entry name" value="WH-like_DNA-bd_sf"/>
</dbReference>
<dbReference type="InterPro" id="IPR036390">
    <property type="entry name" value="WH_DNA-bd_sf"/>
</dbReference>
<dbReference type="NCBIfam" id="NF040708">
    <property type="entry name" value="Siroheme_Dcarb_AhbA"/>
    <property type="match status" value="1"/>
</dbReference>
<dbReference type="PANTHER" id="PTHR43413:SF1">
    <property type="entry name" value="SIROHEME DECARBOXYLASE NIRL SUBUNIT"/>
    <property type="match status" value="1"/>
</dbReference>
<dbReference type="PANTHER" id="PTHR43413">
    <property type="entry name" value="TRANSCRIPTIONAL REGULATOR, ASNC FAMILY"/>
    <property type="match status" value="1"/>
</dbReference>
<dbReference type="Pfam" id="PF17805">
    <property type="entry name" value="AsnC_trans_reg2"/>
    <property type="match status" value="1"/>
</dbReference>
<dbReference type="Pfam" id="PF22451">
    <property type="entry name" value="NirdL-like_HTH"/>
    <property type="match status" value="1"/>
</dbReference>
<dbReference type="SMART" id="SM00344">
    <property type="entry name" value="HTH_ASNC"/>
    <property type="match status" value="1"/>
</dbReference>
<dbReference type="SUPFAM" id="SSF46785">
    <property type="entry name" value="Winged helix' DNA-binding domain"/>
    <property type="match status" value="1"/>
</dbReference>
<evidence type="ECO:0000269" key="1">
    <source>
    </source>
</evidence>
<evidence type="ECO:0000303" key="2">
    <source>
    </source>
</evidence>
<evidence type="ECO:0000305" key="3"/>
<evidence type="ECO:0000312" key="4">
    <source>
        <dbReference type="EMBL" id="ABB39374.1"/>
    </source>
</evidence>
<name>AHBA_OLEA2</name>
<gene>
    <name evidence="2" type="primary">ahbA</name>
    <name evidence="4" type="ordered locus">Dde_2578</name>
</gene>
<comment type="function">
    <text evidence="1">Involved in siroheme-dependent heme b biosynthesis. Catalyzes the decarboxylation of siroheme into didecarboxysiroheme.</text>
</comment>
<comment type="catalytic activity">
    <reaction evidence="1">
        <text>siroheme + 2 H(+) = 12,18-didecarboxysiroheme + 2 CO2</text>
        <dbReference type="Rhea" id="RHEA:19093"/>
        <dbReference type="ChEBI" id="CHEBI:15378"/>
        <dbReference type="ChEBI" id="CHEBI:16526"/>
        <dbReference type="ChEBI" id="CHEBI:60052"/>
        <dbReference type="ChEBI" id="CHEBI:140497"/>
        <dbReference type="EC" id="4.1.1.111"/>
    </reaction>
</comment>
<comment type="pathway">
    <text evidence="1">Porphyrin-containing compound metabolism; protoheme biosynthesis.</text>
</comment>
<comment type="subunit">
    <text evidence="1">Forms a heterodimer composed of AhbA and AhbB.</text>
</comment>
<comment type="similarity">
    <text evidence="3">Belongs to the Ahb/Nir family.</text>
</comment>